<accession>B9IVD1</accession>
<gene>
    <name evidence="1" type="primary">rimM</name>
    <name type="ordered locus">BCQ_3627</name>
</gene>
<sequence length="171" mass="19302">MTKWFNVGKIVNTHGVKGEIRVVSRTDFPEERYKVGNTLYISNEKGGEPFPVKITSHRQHKTFDLLTFEGYGNVNEVEQFKGSLLKVPEDQLGELAEGEYYYHEIIGCNVVTEEGEALGTIKEVLSPGANDVWVIKRPKGQDLLIPYIDDVVLQVNIENKLVTIHVMEGLL</sequence>
<feature type="chain" id="PRO_1000116562" description="Ribosome maturation factor RimM">
    <location>
        <begin position="1"/>
        <end position="171"/>
    </location>
</feature>
<feature type="domain" description="PRC barrel" evidence="1">
    <location>
        <begin position="96"/>
        <end position="170"/>
    </location>
</feature>
<evidence type="ECO:0000255" key="1">
    <source>
        <dbReference type="HAMAP-Rule" id="MF_00014"/>
    </source>
</evidence>
<dbReference type="EMBL" id="CP000227">
    <property type="protein sequence ID" value="ACM14055.1"/>
    <property type="molecule type" value="Genomic_DNA"/>
</dbReference>
<dbReference type="SMR" id="B9IVD1"/>
<dbReference type="KEGG" id="bcq:BCQ_3627"/>
<dbReference type="HOGENOM" id="CLU_077636_3_1_9"/>
<dbReference type="Proteomes" id="UP000000441">
    <property type="component" value="Chromosome"/>
</dbReference>
<dbReference type="GO" id="GO:0005737">
    <property type="term" value="C:cytoplasm"/>
    <property type="evidence" value="ECO:0007669"/>
    <property type="project" value="UniProtKB-SubCell"/>
</dbReference>
<dbReference type="GO" id="GO:0005840">
    <property type="term" value="C:ribosome"/>
    <property type="evidence" value="ECO:0007669"/>
    <property type="project" value="InterPro"/>
</dbReference>
<dbReference type="GO" id="GO:0043022">
    <property type="term" value="F:ribosome binding"/>
    <property type="evidence" value="ECO:0007669"/>
    <property type="project" value="InterPro"/>
</dbReference>
<dbReference type="GO" id="GO:0042274">
    <property type="term" value="P:ribosomal small subunit biogenesis"/>
    <property type="evidence" value="ECO:0007669"/>
    <property type="project" value="UniProtKB-UniRule"/>
</dbReference>
<dbReference type="GO" id="GO:0006364">
    <property type="term" value="P:rRNA processing"/>
    <property type="evidence" value="ECO:0007669"/>
    <property type="project" value="UniProtKB-UniRule"/>
</dbReference>
<dbReference type="Gene3D" id="2.30.30.240">
    <property type="entry name" value="PRC-barrel domain"/>
    <property type="match status" value="1"/>
</dbReference>
<dbReference type="Gene3D" id="2.40.30.60">
    <property type="entry name" value="RimM"/>
    <property type="match status" value="1"/>
</dbReference>
<dbReference type="HAMAP" id="MF_00014">
    <property type="entry name" value="Ribosome_mat_RimM"/>
    <property type="match status" value="1"/>
</dbReference>
<dbReference type="InterPro" id="IPR027275">
    <property type="entry name" value="PRC-brl_dom"/>
</dbReference>
<dbReference type="InterPro" id="IPR011033">
    <property type="entry name" value="PRC_barrel-like_sf"/>
</dbReference>
<dbReference type="InterPro" id="IPR011961">
    <property type="entry name" value="RimM"/>
</dbReference>
<dbReference type="InterPro" id="IPR002676">
    <property type="entry name" value="RimM_N"/>
</dbReference>
<dbReference type="InterPro" id="IPR036976">
    <property type="entry name" value="RimM_N_sf"/>
</dbReference>
<dbReference type="InterPro" id="IPR009000">
    <property type="entry name" value="Transl_B-barrel_sf"/>
</dbReference>
<dbReference type="NCBIfam" id="TIGR02273">
    <property type="entry name" value="16S_RimM"/>
    <property type="match status" value="1"/>
</dbReference>
<dbReference type="PANTHER" id="PTHR33692">
    <property type="entry name" value="RIBOSOME MATURATION FACTOR RIMM"/>
    <property type="match status" value="1"/>
</dbReference>
<dbReference type="PANTHER" id="PTHR33692:SF1">
    <property type="entry name" value="RIBOSOME MATURATION FACTOR RIMM"/>
    <property type="match status" value="1"/>
</dbReference>
<dbReference type="Pfam" id="PF05239">
    <property type="entry name" value="PRC"/>
    <property type="match status" value="1"/>
</dbReference>
<dbReference type="Pfam" id="PF01782">
    <property type="entry name" value="RimM"/>
    <property type="match status" value="1"/>
</dbReference>
<dbReference type="SUPFAM" id="SSF50346">
    <property type="entry name" value="PRC-barrel domain"/>
    <property type="match status" value="1"/>
</dbReference>
<dbReference type="SUPFAM" id="SSF50447">
    <property type="entry name" value="Translation proteins"/>
    <property type="match status" value="1"/>
</dbReference>
<comment type="function">
    <text evidence="1">An accessory protein needed during the final step in the assembly of 30S ribosomal subunit, possibly for assembly of the head region. Essential for efficient processing of 16S rRNA. May be needed both before and after RbfA during the maturation of 16S rRNA. It has affinity for free ribosomal 30S subunits but not for 70S ribosomes.</text>
</comment>
<comment type="subunit">
    <text evidence="1">Binds ribosomal protein uS19.</text>
</comment>
<comment type="subcellular location">
    <subcellularLocation>
        <location evidence="1">Cytoplasm</location>
    </subcellularLocation>
</comment>
<comment type="domain">
    <text evidence="1">The PRC barrel domain binds ribosomal protein uS19.</text>
</comment>
<comment type="similarity">
    <text evidence="1">Belongs to the RimM family.</text>
</comment>
<protein>
    <recommendedName>
        <fullName evidence="1">Ribosome maturation factor RimM</fullName>
    </recommendedName>
</protein>
<name>RIMM_BACCQ</name>
<keyword id="KW-0143">Chaperone</keyword>
<keyword id="KW-0963">Cytoplasm</keyword>
<keyword id="KW-0690">Ribosome biogenesis</keyword>
<keyword id="KW-0698">rRNA processing</keyword>
<reference key="1">
    <citation type="journal article" date="2009" name="J. Bacteriol.">
        <title>Complete genome sequence of the extremophilic Bacillus cereus strain Q1 with industrial applications.</title>
        <authorList>
            <person name="Xiong Z."/>
            <person name="Jiang Y."/>
            <person name="Qi D."/>
            <person name="Lu H."/>
            <person name="Yang F."/>
            <person name="Yang J."/>
            <person name="Chen L."/>
            <person name="Sun L."/>
            <person name="Xu X."/>
            <person name="Xue Y."/>
            <person name="Zhu Y."/>
            <person name="Jin Q."/>
        </authorList>
    </citation>
    <scope>NUCLEOTIDE SEQUENCE [LARGE SCALE GENOMIC DNA]</scope>
    <source>
        <strain>Q1</strain>
    </source>
</reference>
<organism>
    <name type="scientific">Bacillus cereus (strain Q1)</name>
    <dbReference type="NCBI Taxonomy" id="361100"/>
    <lineage>
        <taxon>Bacteria</taxon>
        <taxon>Bacillati</taxon>
        <taxon>Bacillota</taxon>
        <taxon>Bacilli</taxon>
        <taxon>Bacillales</taxon>
        <taxon>Bacillaceae</taxon>
        <taxon>Bacillus</taxon>
        <taxon>Bacillus cereus group</taxon>
    </lineage>
</organism>
<proteinExistence type="inferred from homology"/>